<sequence length="135" mass="15373">MIIGIGNDTEAISRVGQIVARQTKFMDSILTPAEREQALERKGKHFHEFVAGRFSAKEAFSKATGYGIGEKVHWHDIEILNEPNGRPIMQVKNFRYKTYVAITHSGDFVNTVVIIERLTILERLSLKFFPKRGVL</sequence>
<evidence type="ECO:0000255" key="1">
    <source>
        <dbReference type="HAMAP-Rule" id="MF_00101"/>
    </source>
</evidence>
<feature type="chain" id="PRO_1000093892" description="Holo-[acyl-carrier-protein] synthase">
    <location>
        <begin position="1"/>
        <end position="135"/>
    </location>
</feature>
<feature type="binding site" evidence="1">
    <location>
        <position position="8"/>
    </location>
    <ligand>
        <name>Mg(2+)</name>
        <dbReference type="ChEBI" id="CHEBI:18420"/>
    </ligand>
</feature>
<feature type="binding site" evidence="1">
    <location>
        <position position="58"/>
    </location>
    <ligand>
        <name>Mg(2+)</name>
        <dbReference type="ChEBI" id="CHEBI:18420"/>
    </ligand>
</feature>
<protein>
    <recommendedName>
        <fullName evidence="1">Holo-[acyl-carrier-protein] synthase</fullName>
        <shortName evidence="1">Holo-ACP synthase</shortName>
        <ecNumber evidence="1">2.7.8.7</ecNumber>
    </recommendedName>
    <alternativeName>
        <fullName evidence="1">4'-phosphopantetheinyl transferase AcpS</fullName>
    </alternativeName>
</protein>
<comment type="function">
    <text evidence="1">Transfers the 4'-phosphopantetheine moiety from coenzyme A to a Ser of acyl-carrier-protein.</text>
</comment>
<comment type="catalytic activity">
    <reaction evidence="1">
        <text>apo-[ACP] + CoA = holo-[ACP] + adenosine 3',5'-bisphosphate + H(+)</text>
        <dbReference type="Rhea" id="RHEA:12068"/>
        <dbReference type="Rhea" id="RHEA-COMP:9685"/>
        <dbReference type="Rhea" id="RHEA-COMP:9690"/>
        <dbReference type="ChEBI" id="CHEBI:15378"/>
        <dbReference type="ChEBI" id="CHEBI:29999"/>
        <dbReference type="ChEBI" id="CHEBI:57287"/>
        <dbReference type="ChEBI" id="CHEBI:58343"/>
        <dbReference type="ChEBI" id="CHEBI:64479"/>
        <dbReference type="EC" id="2.7.8.7"/>
    </reaction>
</comment>
<comment type="cofactor">
    <cofactor evidence="1">
        <name>Mg(2+)</name>
        <dbReference type="ChEBI" id="CHEBI:18420"/>
    </cofactor>
</comment>
<comment type="subcellular location">
    <subcellularLocation>
        <location evidence="1">Cytoplasm</location>
    </subcellularLocation>
</comment>
<comment type="similarity">
    <text evidence="1">Belongs to the P-Pant transferase superfamily. AcpS family.</text>
</comment>
<keyword id="KW-0963">Cytoplasm</keyword>
<keyword id="KW-0275">Fatty acid biosynthesis</keyword>
<keyword id="KW-0276">Fatty acid metabolism</keyword>
<keyword id="KW-0444">Lipid biosynthesis</keyword>
<keyword id="KW-0443">Lipid metabolism</keyword>
<keyword id="KW-0460">Magnesium</keyword>
<keyword id="KW-0479">Metal-binding</keyword>
<keyword id="KW-1185">Reference proteome</keyword>
<keyword id="KW-0808">Transferase</keyword>
<name>ACPS_LEUCK</name>
<dbReference type="EC" id="2.7.8.7" evidence="1"/>
<dbReference type="EMBL" id="DQ489736">
    <property type="protein sequence ID" value="ACA82057.1"/>
    <property type="molecule type" value="Genomic_DNA"/>
</dbReference>
<dbReference type="RefSeq" id="WP_004901356.1">
    <property type="nucleotide sequence ID" value="NC_010471.1"/>
</dbReference>
<dbReference type="SMR" id="B1MX05"/>
<dbReference type="STRING" id="349519.LCK_00224"/>
<dbReference type="GeneID" id="61102852"/>
<dbReference type="KEGG" id="lci:LCK_00224"/>
<dbReference type="eggNOG" id="COG0736">
    <property type="taxonomic scope" value="Bacteria"/>
</dbReference>
<dbReference type="HOGENOM" id="CLU_089696_1_2_9"/>
<dbReference type="OrthoDB" id="517356at2"/>
<dbReference type="Proteomes" id="UP000002166">
    <property type="component" value="Chromosome"/>
</dbReference>
<dbReference type="GO" id="GO:0005737">
    <property type="term" value="C:cytoplasm"/>
    <property type="evidence" value="ECO:0007669"/>
    <property type="project" value="UniProtKB-SubCell"/>
</dbReference>
<dbReference type="GO" id="GO:0008897">
    <property type="term" value="F:holo-[acyl-carrier-protein] synthase activity"/>
    <property type="evidence" value="ECO:0007669"/>
    <property type="project" value="UniProtKB-UniRule"/>
</dbReference>
<dbReference type="GO" id="GO:0000287">
    <property type="term" value="F:magnesium ion binding"/>
    <property type="evidence" value="ECO:0007669"/>
    <property type="project" value="UniProtKB-UniRule"/>
</dbReference>
<dbReference type="GO" id="GO:0006633">
    <property type="term" value="P:fatty acid biosynthetic process"/>
    <property type="evidence" value="ECO:0007669"/>
    <property type="project" value="UniProtKB-UniRule"/>
</dbReference>
<dbReference type="Gene3D" id="3.90.470.20">
    <property type="entry name" value="4'-phosphopantetheinyl transferase domain"/>
    <property type="match status" value="1"/>
</dbReference>
<dbReference type="HAMAP" id="MF_00101">
    <property type="entry name" value="AcpS"/>
    <property type="match status" value="1"/>
</dbReference>
<dbReference type="InterPro" id="IPR008278">
    <property type="entry name" value="4-PPantetheinyl_Trfase_dom"/>
</dbReference>
<dbReference type="InterPro" id="IPR037143">
    <property type="entry name" value="4-PPantetheinyl_Trfase_dom_sf"/>
</dbReference>
<dbReference type="InterPro" id="IPR002582">
    <property type="entry name" value="ACPS"/>
</dbReference>
<dbReference type="InterPro" id="IPR004568">
    <property type="entry name" value="Ppantetheine-prot_Trfase_dom"/>
</dbReference>
<dbReference type="NCBIfam" id="TIGR00516">
    <property type="entry name" value="acpS"/>
    <property type="match status" value="1"/>
</dbReference>
<dbReference type="NCBIfam" id="TIGR00556">
    <property type="entry name" value="pantethn_trn"/>
    <property type="match status" value="1"/>
</dbReference>
<dbReference type="Pfam" id="PF01648">
    <property type="entry name" value="ACPS"/>
    <property type="match status" value="1"/>
</dbReference>
<dbReference type="SUPFAM" id="SSF56214">
    <property type="entry name" value="4'-phosphopantetheinyl transferase"/>
    <property type="match status" value="1"/>
</dbReference>
<reference key="1">
    <citation type="journal article" date="2008" name="J. Bacteriol.">
        <title>Complete genome sequence of Leuconostoc citreum KM20.</title>
        <authorList>
            <person name="Kim J.F."/>
            <person name="Jeong H."/>
            <person name="Lee J.-S."/>
            <person name="Choi S.-H."/>
            <person name="Ha M."/>
            <person name="Hur C.-G."/>
            <person name="Kim J.-S."/>
            <person name="Lee S."/>
            <person name="Park H.-S."/>
            <person name="Park Y.-H."/>
            <person name="Oh T.K."/>
        </authorList>
    </citation>
    <scope>NUCLEOTIDE SEQUENCE [LARGE SCALE GENOMIC DNA]</scope>
    <source>
        <strain>KM20</strain>
    </source>
</reference>
<organism>
    <name type="scientific">Leuconostoc citreum (strain KM20)</name>
    <dbReference type="NCBI Taxonomy" id="349519"/>
    <lineage>
        <taxon>Bacteria</taxon>
        <taxon>Bacillati</taxon>
        <taxon>Bacillota</taxon>
        <taxon>Bacilli</taxon>
        <taxon>Lactobacillales</taxon>
        <taxon>Lactobacillaceae</taxon>
        <taxon>Leuconostoc</taxon>
    </lineage>
</organism>
<proteinExistence type="inferred from homology"/>
<gene>
    <name evidence="1" type="primary">acpS</name>
    <name type="ordered locus">LCK_00224</name>
</gene>
<accession>B1MX05</accession>